<keyword id="KW-0002">3D-structure</keyword>
<keyword id="KW-0007">Acetylation</keyword>
<keyword id="KW-0010">Activator</keyword>
<keyword id="KW-0963">Cytoplasm</keyword>
<keyword id="KW-0238">DNA-binding</keyword>
<keyword id="KW-0539">Nucleus</keyword>
<keyword id="KW-1185">Reference proteome</keyword>
<keyword id="KW-0804">Transcription</keyword>
<keyword id="KW-0805">Transcription regulation</keyword>
<sequence length="161" mass="17186">MADSDNDSGGHKDGGNASTREQDRFLPIANVSRIMKKALPANAKISKDAKETVQECVSEFISFITGEASDKCQREKRKTINGDDLLWAMTTLGFEDYVEPLKVYLQKYREVEGEKTTTAGRQGDKEGGGGGGGAGSGSGGAPMYGGGMVTTMGHQFSHHFS</sequence>
<evidence type="ECO:0000250" key="1"/>
<evidence type="ECO:0000250" key="2">
    <source>
        <dbReference type="UniProtKB" id="P13434"/>
    </source>
</evidence>
<evidence type="ECO:0000250" key="3">
    <source>
        <dbReference type="UniProtKB" id="P23511"/>
    </source>
</evidence>
<evidence type="ECO:0000250" key="4">
    <source>
        <dbReference type="UniProtKB" id="Q84W66"/>
    </source>
</evidence>
<evidence type="ECO:0000250" key="5">
    <source>
        <dbReference type="UniProtKB" id="Q9SLG0"/>
    </source>
</evidence>
<evidence type="ECO:0000256" key="6">
    <source>
        <dbReference type="SAM" id="MobiDB-lite"/>
    </source>
</evidence>
<evidence type="ECO:0000269" key="7">
    <source>
    </source>
</evidence>
<evidence type="ECO:0000269" key="8">
    <source>
    </source>
</evidence>
<evidence type="ECO:0000303" key="9">
    <source>
    </source>
</evidence>
<evidence type="ECO:0000303" key="10">
    <source>
    </source>
</evidence>
<evidence type="ECO:0000303" key="11">
    <source>
    </source>
</evidence>
<evidence type="ECO:0000305" key="12"/>
<evidence type="ECO:0000312" key="13">
    <source>
        <dbReference type="Araport" id="AT4G14540"/>
    </source>
</evidence>
<evidence type="ECO:0000312" key="14">
    <source>
        <dbReference type="EMBL" id="CAB10233.1"/>
    </source>
</evidence>
<evidence type="ECO:0000312" key="15">
    <source>
        <dbReference type="EMBL" id="CAB78496.1"/>
    </source>
</evidence>
<evidence type="ECO:0007829" key="16">
    <source>
        <dbReference type="PDB" id="7CVO"/>
    </source>
</evidence>
<protein>
    <recommendedName>
        <fullName evidence="9 10">Nuclear transcription factor Y subunit B-3</fullName>
        <shortName evidence="9 10">AtNF-YB-3</shortName>
        <shortName evidence="11">AtNF-YB3</shortName>
    </recommendedName>
    <alternativeName>
        <fullName>Transcriptional activator HAP3C</fullName>
    </alternativeName>
</protein>
<accession>O23310</accession>
<proteinExistence type="evidence at protein level"/>
<reference key="1">
    <citation type="journal article" date="1998" name="Nature">
        <title>Analysis of 1.9 Mb of contiguous sequence from chromosome 4 of Arabidopsis thaliana.</title>
        <authorList>
            <person name="Bevan M."/>
            <person name="Bancroft I."/>
            <person name="Bent E."/>
            <person name="Love K."/>
            <person name="Goodman H.M."/>
            <person name="Dean C."/>
            <person name="Bergkamp R."/>
            <person name="Dirkse W."/>
            <person name="van Staveren M."/>
            <person name="Stiekema W."/>
            <person name="Drost L."/>
            <person name="Ridley P."/>
            <person name="Hudson S.-A."/>
            <person name="Patel K."/>
            <person name="Murphy G."/>
            <person name="Piffanelli P."/>
            <person name="Wedler H."/>
            <person name="Wedler E."/>
            <person name="Wambutt R."/>
            <person name="Weitzenegger T."/>
            <person name="Pohl T."/>
            <person name="Terryn N."/>
            <person name="Gielen J."/>
            <person name="Villarroel R."/>
            <person name="De Clercq R."/>
            <person name="van Montagu M."/>
            <person name="Lecharny A."/>
            <person name="Aubourg S."/>
            <person name="Gy I."/>
            <person name="Kreis M."/>
            <person name="Lao N."/>
            <person name="Kavanagh T."/>
            <person name="Hempel S."/>
            <person name="Kotter P."/>
            <person name="Entian K.-D."/>
            <person name="Rieger M."/>
            <person name="Schaefer M."/>
            <person name="Funk B."/>
            <person name="Mueller-Auer S."/>
            <person name="Silvey M."/>
            <person name="James R."/>
            <person name="Monfort A."/>
            <person name="Pons A."/>
            <person name="Puigdomenech P."/>
            <person name="Douka A."/>
            <person name="Voukelatou E."/>
            <person name="Milioni D."/>
            <person name="Hatzopoulos P."/>
            <person name="Piravandi E."/>
            <person name="Obermaier B."/>
            <person name="Hilbert H."/>
            <person name="Duesterhoeft A."/>
            <person name="Moores T."/>
            <person name="Jones J.D.G."/>
            <person name="Eneva T."/>
            <person name="Palme K."/>
            <person name="Benes V."/>
            <person name="Rechmann S."/>
            <person name="Ansorge W."/>
            <person name="Cooke R."/>
            <person name="Berger C."/>
            <person name="Delseny M."/>
            <person name="Voet M."/>
            <person name="Volckaert G."/>
            <person name="Mewes H.-W."/>
            <person name="Klosterman S."/>
            <person name="Schueller C."/>
            <person name="Chalwatzis N."/>
        </authorList>
    </citation>
    <scope>NUCLEOTIDE SEQUENCE [LARGE SCALE GENOMIC DNA]</scope>
    <source>
        <strain>cv. Columbia</strain>
    </source>
</reference>
<reference key="2">
    <citation type="journal article" date="1999" name="Nature">
        <title>Sequence and analysis of chromosome 4 of the plant Arabidopsis thaliana.</title>
        <authorList>
            <person name="Mayer K.F.X."/>
            <person name="Schueller C."/>
            <person name="Wambutt R."/>
            <person name="Murphy G."/>
            <person name="Volckaert G."/>
            <person name="Pohl T."/>
            <person name="Duesterhoeft A."/>
            <person name="Stiekema W."/>
            <person name="Entian K.-D."/>
            <person name="Terryn N."/>
            <person name="Harris B."/>
            <person name="Ansorge W."/>
            <person name="Brandt P."/>
            <person name="Grivell L.A."/>
            <person name="Rieger M."/>
            <person name="Weichselgartner M."/>
            <person name="de Simone V."/>
            <person name="Obermaier B."/>
            <person name="Mache R."/>
            <person name="Mueller M."/>
            <person name="Kreis M."/>
            <person name="Delseny M."/>
            <person name="Puigdomenech P."/>
            <person name="Watson M."/>
            <person name="Schmidtheini T."/>
            <person name="Reichert B."/>
            <person name="Portetelle D."/>
            <person name="Perez-Alonso M."/>
            <person name="Boutry M."/>
            <person name="Bancroft I."/>
            <person name="Vos P."/>
            <person name="Hoheisel J."/>
            <person name="Zimmermann W."/>
            <person name="Wedler H."/>
            <person name="Ridley P."/>
            <person name="Langham S.-A."/>
            <person name="McCullagh B."/>
            <person name="Bilham L."/>
            <person name="Robben J."/>
            <person name="van der Schueren J."/>
            <person name="Grymonprez B."/>
            <person name="Chuang Y.-J."/>
            <person name="Vandenbussche F."/>
            <person name="Braeken M."/>
            <person name="Weltjens I."/>
            <person name="Voet M."/>
            <person name="Bastiaens I."/>
            <person name="Aert R."/>
            <person name="Defoor E."/>
            <person name="Weitzenegger T."/>
            <person name="Bothe G."/>
            <person name="Ramsperger U."/>
            <person name="Hilbert H."/>
            <person name="Braun M."/>
            <person name="Holzer E."/>
            <person name="Brandt A."/>
            <person name="Peters S."/>
            <person name="van Staveren M."/>
            <person name="Dirkse W."/>
            <person name="Mooijman P."/>
            <person name="Klein Lankhorst R."/>
            <person name="Rose M."/>
            <person name="Hauf J."/>
            <person name="Koetter P."/>
            <person name="Berneiser S."/>
            <person name="Hempel S."/>
            <person name="Feldpausch M."/>
            <person name="Lamberth S."/>
            <person name="Van den Daele H."/>
            <person name="De Keyser A."/>
            <person name="Buysshaert C."/>
            <person name="Gielen J."/>
            <person name="Villarroel R."/>
            <person name="De Clercq R."/>
            <person name="van Montagu M."/>
            <person name="Rogers J."/>
            <person name="Cronin A."/>
            <person name="Quail M.A."/>
            <person name="Bray-Allen S."/>
            <person name="Clark L."/>
            <person name="Doggett J."/>
            <person name="Hall S."/>
            <person name="Kay M."/>
            <person name="Lennard N."/>
            <person name="McLay K."/>
            <person name="Mayes R."/>
            <person name="Pettett A."/>
            <person name="Rajandream M.A."/>
            <person name="Lyne M."/>
            <person name="Benes V."/>
            <person name="Rechmann S."/>
            <person name="Borkova D."/>
            <person name="Bloecker H."/>
            <person name="Scharfe M."/>
            <person name="Grimm M."/>
            <person name="Loehnert T.-H."/>
            <person name="Dose S."/>
            <person name="de Haan M."/>
            <person name="Maarse A.C."/>
            <person name="Schaefer M."/>
            <person name="Mueller-Auer S."/>
            <person name="Gabel C."/>
            <person name="Fuchs M."/>
            <person name="Fartmann B."/>
            <person name="Granderath K."/>
            <person name="Dauner D."/>
            <person name="Herzl A."/>
            <person name="Neumann S."/>
            <person name="Argiriou A."/>
            <person name="Vitale D."/>
            <person name="Liguori R."/>
            <person name="Piravandi E."/>
            <person name="Massenet O."/>
            <person name="Quigley F."/>
            <person name="Clabauld G."/>
            <person name="Muendlein A."/>
            <person name="Felber R."/>
            <person name="Schnabl S."/>
            <person name="Hiller R."/>
            <person name="Schmidt W."/>
            <person name="Lecharny A."/>
            <person name="Aubourg S."/>
            <person name="Chefdor F."/>
            <person name="Cooke R."/>
            <person name="Berger C."/>
            <person name="Monfort A."/>
            <person name="Casacuberta E."/>
            <person name="Gibbons T."/>
            <person name="Weber N."/>
            <person name="Vandenbol M."/>
            <person name="Bargues M."/>
            <person name="Terol J."/>
            <person name="Torres A."/>
            <person name="Perez-Perez A."/>
            <person name="Purnelle B."/>
            <person name="Bent E."/>
            <person name="Johnson S."/>
            <person name="Tacon D."/>
            <person name="Jesse T."/>
            <person name="Heijnen L."/>
            <person name="Schwarz S."/>
            <person name="Scholler P."/>
            <person name="Heber S."/>
            <person name="Francs P."/>
            <person name="Bielke C."/>
            <person name="Frishman D."/>
            <person name="Haase D."/>
            <person name="Lemcke K."/>
            <person name="Mewes H.-W."/>
            <person name="Stocker S."/>
            <person name="Zaccaria P."/>
            <person name="Bevan M."/>
            <person name="Wilson R.K."/>
            <person name="de la Bastide M."/>
            <person name="Habermann K."/>
            <person name="Parnell L."/>
            <person name="Dedhia N."/>
            <person name="Gnoj L."/>
            <person name="Schutz K."/>
            <person name="Huang E."/>
            <person name="Spiegel L."/>
            <person name="Sekhon M."/>
            <person name="Murray J."/>
            <person name="Sheet P."/>
            <person name="Cordes M."/>
            <person name="Abu-Threideh J."/>
            <person name="Stoneking T."/>
            <person name="Kalicki J."/>
            <person name="Graves T."/>
            <person name="Harmon G."/>
            <person name="Edwards J."/>
            <person name="Latreille P."/>
            <person name="Courtney L."/>
            <person name="Cloud J."/>
            <person name="Abbott A."/>
            <person name="Scott K."/>
            <person name="Johnson D."/>
            <person name="Minx P."/>
            <person name="Bentley D."/>
            <person name="Fulton B."/>
            <person name="Miller N."/>
            <person name="Greco T."/>
            <person name="Kemp K."/>
            <person name="Kramer J."/>
            <person name="Fulton L."/>
            <person name="Mardis E."/>
            <person name="Dante M."/>
            <person name="Pepin K."/>
            <person name="Hillier L.W."/>
            <person name="Nelson J."/>
            <person name="Spieth J."/>
            <person name="Ryan E."/>
            <person name="Andrews S."/>
            <person name="Geisel C."/>
            <person name="Layman D."/>
            <person name="Du H."/>
            <person name="Ali J."/>
            <person name="Berghoff A."/>
            <person name="Jones K."/>
            <person name="Drone K."/>
            <person name="Cotton M."/>
            <person name="Joshu C."/>
            <person name="Antonoiu B."/>
            <person name="Zidanic M."/>
            <person name="Strong C."/>
            <person name="Sun H."/>
            <person name="Lamar B."/>
            <person name="Yordan C."/>
            <person name="Ma P."/>
            <person name="Zhong J."/>
            <person name="Preston R."/>
            <person name="Vil D."/>
            <person name="Shekher M."/>
            <person name="Matero A."/>
            <person name="Shah R."/>
            <person name="Swaby I.K."/>
            <person name="O'Shaughnessy A."/>
            <person name="Rodriguez M."/>
            <person name="Hoffman J."/>
            <person name="Till S."/>
            <person name="Granat S."/>
            <person name="Shohdy N."/>
            <person name="Hasegawa A."/>
            <person name="Hameed A."/>
            <person name="Lodhi M."/>
            <person name="Johnson A."/>
            <person name="Chen E."/>
            <person name="Marra M.A."/>
            <person name="Martienssen R."/>
            <person name="McCombie W.R."/>
        </authorList>
    </citation>
    <scope>NUCLEOTIDE SEQUENCE [LARGE SCALE GENOMIC DNA]</scope>
    <source>
        <strain>cv. Columbia</strain>
    </source>
</reference>
<reference key="3">
    <citation type="journal article" date="2017" name="Plant J.">
        <title>Araport11: a complete reannotation of the Arabidopsis thaliana reference genome.</title>
        <authorList>
            <person name="Cheng C.Y."/>
            <person name="Krishnakumar V."/>
            <person name="Chan A.P."/>
            <person name="Thibaud-Nissen F."/>
            <person name="Schobel S."/>
            <person name="Town C.D."/>
        </authorList>
    </citation>
    <scope>GENOME REANNOTATION</scope>
    <source>
        <strain>cv. Columbia</strain>
    </source>
</reference>
<reference key="4">
    <citation type="journal article" date="2002" name="Science">
        <title>Functional annotation of a full-length Arabidopsis cDNA collection.</title>
        <authorList>
            <person name="Seki M."/>
            <person name="Narusaka M."/>
            <person name="Kamiya A."/>
            <person name="Ishida J."/>
            <person name="Satou M."/>
            <person name="Sakurai T."/>
            <person name="Nakajima M."/>
            <person name="Enju A."/>
            <person name="Akiyama K."/>
            <person name="Oono Y."/>
            <person name="Muramatsu M."/>
            <person name="Hayashizaki Y."/>
            <person name="Kawai J."/>
            <person name="Carninci P."/>
            <person name="Itoh M."/>
            <person name="Ishii Y."/>
            <person name="Arakawa T."/>
            <person name="Shibata K."/>
            <person name="Shinagawa A."/>
            <person name="Shinozaki K."/>
        </authorList>
    </citation>
    <scope>NUCLEOTIDE SEQUENCE [LARGE SCALE MRNA]</scope>
    <source>
        <strain>cv. Columbia</strain>
    </source>
</reference>
<reference key="5">
    <citation type="journal article" date="2003" name="Science">
        <title>Empirical analysis of transcriptional activity in the Arabidopsis genome.</title>
        <authorList>
            <person name="Yamada K."/>
            <person name="Lim J."/>
            <person name="Dale J.M."/>
            <person name="Chen H."/>
            <person name="Shinn P."/>
            <person name="Palm C.J."/>
            <person name="Southwick A.M."/>
            <person name="Wu H.C."/>
            <person name="Kim C.J."/>
            <person name="Nguyen M."/>
            <person name="Pham P.K."/>
            <person name="Cheuk R.F."/>
            <person name="Karlin-Newmann G."/>
            <person name="Liu S.X."/>
            <person name="Lam B."/>
            <person name="Sakano H."/>
            <person name="Wu T."/>
            <person name="Yu G."/>
            <person name="Miranda M."/>
            <person name="Quach H.L."/>
            <person name="Tripp M."/>
            <person name="Chang C.H."/>
            <person name="Lee J.M."/>
            <person name="Toriumi M.J."/>
            <person name="Chan M.M."/>
            <person name="Tang C.C."/>
            <person name="Onodera C.S."/>
            <person name="Deng J.M."/>
            <person name="Akiyama K."/>
            <person name="Ansari Y."/>
            <person name="Arakawa T."/>
            <person name="Banh J."/>
            <person name="Banno F."/>
            <person name="Bowser L."/>
            <person name="Brooks S.Y."/>
            <person name="Carninci P."/>
            <person name="Chao Q."/>
            <person name="Choy N."/>
            <person name="Enju A."/>
            <person name="Goldsmith A.D."/>
            <person name="Gurjal M."/>
            <person name="Hansen N.F."/>
            <person name="Hayashizaki Y."/>
            <person name="Johnson-Hopson C."/>
            <person name="Hsuan V.W."/>
            <person name="Iida K."/>
            <person name="Karnes M."/>
            <person name="Khan S."/>
            <person name="Koesema E."/>
            <person name="Ishida J."/>
            <person name="Jiang P.X."/>
            <person name="Jones T."/>
            <person name="Kawai J."/>
            <person name="Kamiya A."/>
            <person name="Meyers C."/>
            <person name="Nakajima M."/>
            <person name="Narusaka M."/>
            <person name="Seki M."/>
            <person name="Sakurai T."/>
            <person name="Satou M."/>
            <person name="Tamse R."/>
            <person name="Vaysberg M."/>
            <person name="Wallender E.K."/>
            <person name="Wong C."/>
            <person name="Yamamura Y."/>
            <person name="Yuan S."/>
            <person name="Shinozaki K."/>
            <person name="Davis R.W."/>
            <person name="Theologis A."/>
            <person name="Ecker J.R."/>
        </authorList>
    </citation>
    <scope>NUCLEOTIDE SEQUENCE [LARGE SCALE MRNA]</scope>
    <source>
        <strain>cv. Columbia</strain>
    </source>
</reference>
<reference key="6">
    <citation type="journal article" date="2001" name="Gene">
        <title>Regulation of the CCAAT-binding NF-Y subunits in Arabidopsis thaliana.</title>
        <authorList>
            <person name="Gusmaroli G."/>
            <person name="Tonelli C."/>
            <person name="Mantovani R."/>
        </authorList>
    </citation>
    <scope>TISSUE SPECIFICITY</scope>
</reference>
<reference key="7">
    <citation type="journal article" date="2002" name="Gene">
        <title>Regulation of novel members of the Arabidopsis thaliana CCAAT-binding nuclear factor Y subunits.</title>
        <authorList>
            <person name="Gusmaroli G."/>
            <person name="Tonelli C."/>
            <person name="Mantovani R."/>
        </authorList>
    </citation>
    <scope>GENE FAMILY</scope>
    <scope>NOMENCLATURE</scope>
</reference>
<reference key="8">
    <citation type="journal article" date="2014" name="Plant Cell">
        <title>Arabidopsis DPB3-1, a DREB2A interactor, specifically enhances heat stress-induced gene expression by forming a heat stress-specific transcriptional complex with NF-Y subunits.</title>
        <authorList>
            <person name="Sato H."/>
            <person name="Mizoi J."/>
            <person name="Tanaka H."/>
            <person name="Maruyama K."/>
            <person name="Qin F."/>
            <person name="Osakabe Y."/>
            <person name="Morimoto K."/>
            <person name="Ohori T."/>
            <person name="Kusakabe K."/>
            <person name="Nagata M."/>
            <person name="Shinozaki K."/>
            <person name="Yamaguchi-Shinozaki K."/>
        </authorList>
    </citation>
    <scope>FUNCTION</scope>
    <scope>SUBUNIT</scope>
    <scope>INTERACTION WITH DPB3-1</scope>
    <scope>INDUCTION BY HEAT STRESS AND DEHYDRATION</scope>
    <scope>SUBCELLULAR LOCATION</scope>
    <scope>TISSUE SPECIFICITY</scope>
    <scope>DEVELOPMENTAL STAGE</scope>
    <source>
        <strain>cv. Columbia</strain>
    </source>
</reference>
<reference key="9">
    <citation type="journal article" date="2016" name="Front. Plant Sci.">
        <title>The Arabidopsis thaliana Nuclear Factor Y Transcription Factors.</title>
        <authorList>
            <person name="Zhao H."/>
            <person name="Wu D."/>
            <person name="Kong F."/>
            <person name="Lin K."/>
            <person name="Zhang H."/>
            <person name="Li G."/>
        </authorList>
    </citation>
    <scope>REVIEW</scope>
</reference>
<name>NFYB3_ARATH</name>
<comment type="function">
    <text evidence="4 8">Component of the NF-Y/HAP transcription factor complex (By similarity). The NF-Y complex stimulates the transcription of various genes by recognizing and binding to a CCAAT motif in promoters (By similarity). Promotes the expression of heat stress-inducible genes by contributing to the formation of a heat stress-specific transcriptional complex with NF-Y subunits (e.g. DPB3-1, NF-YA2 and NF-YB3) and DREB2A at the promoter of target genes, thus promoting heat tolerance (PubMed:25490919).</text>
</comment>
<comment type="subunit">
    <text evidence="3 8">Heterotrimeric transcription factor composed of three components, NF-YA, NF-YB and NF-YC (By similarity). NF-YB and NF-YC must interact and dimerize for NF-YA association and DNA binding (By similarity). Component of a heat stress-inducible transcriptional complex with NF-YA and NF-YB subunits made, at least, of NFYA2, NFYB3 and DPB3-1 in cooperation with DREB2A (PubMed:25490919). Binds directly with DPB3-1 (PubMed:25490919).</text>
</comment>
<comment type="interaction">
    <interactant intactId="EBI-4452064">
        <id>O23310</id>
    </interactant>
    <interactant intactId="EBI-4461992">
        <id>Q9LN09</id>
        <label>DPB3-1</label>
    </interactant>
    <organismsDiffer>false</organismsDiffer>
    <experiments>4</experiments>
</comment>
<comment type="interaction">
    <interactant intactId="EBI-4452064">
        <id>O23310</id>
    </interactant>
    <interactant intactId="EBI-4452389">
        <id>Q9LHG0</id>
        <label>NF-YC11</label>
    </interactant>
    <organismsDiffer>false</organismsDiffer>
    <experiments>5</experiments>
</comment>
<comment type="interaction">
    <interactant intactId="EBI-4452064">
        <id>O23310</id>
    </interactant>
    <interactant intactId="EBI-4461713">
        <id>Q8VY64</id>
        <label>NFYA4</label>
    </interactant>
    <organismsDiffer>false</organismsDiffer>
    <experiments>3</experiments>
</comment>
<comment type="interaction">
    <interactant intactId="EBI-4452064">
        <id>O23310</id>
    </interactant>
    <interactant intactId="EBI-15191737">
        <id>Q58CM8</id>
        <label>NFYC10</label>
    </interactant>
    <organismsDiffer>false</organismsDiffer>
    <experiments>3</experiments>
</comment>
<comment type="interaction">
    <interactant intactId="EBI-4452064">
        <id>O23310</id>
    </interactant>
    <interactant intactId="EBI-15191571">
        <id>Q4PSE2</id>
        <label>NFYC8</label>
    </interactant>
    <organismsDiffer>false</organismsDiffer>
    <experiments>3</experiments>
</comment>
<comment type="interaction">
    <interactant intactId="EBI-4452064">
        <id>O23310</id>
    </interactant>
    <interactant intactId="EBI-2466050">
        <id>Q8L4B2</id>
        <label>NFYC9</label>
    </interactant>
    <organismsDiffer>false</organismsDiffer>
    <experiments>3</experiments>
</comment>
<comment type="subcellular location">
    <subcellularLocation>
        <location evidence="8">Nucleus</location>
    </subcellularLocation>
    <subcellularLocation>
        <location evidence="8">Cytoplasm</location>
        <location evidence="8">Cytosol</location>
    </subcellularLocation>
    <text evidence="8">Present in both cytoplasm and nucleus under nonstress conditions but translocates in the nucleus upon heat stress.</text>
</comment>
<comment type="tissue specificity">
    <text evidence="7 8">Ubiquitous (PubMed:11250072). Expressed in seedlings, petioles, hypocotyls, reproductive organ tissues and leaves (PubMed:25490919).</text>
</comment>
<comment type="developmental stage">
    <text evidence="8">In seedlings, first expressed in petioles and leaf blades of the cotyledons as well as tops and bottoms of the hypocotyls.</text>
</comment>
<comment type="induction">
    <text evidence="8">Enhanced by heat stress but repressed by dehydration stress.</text>
</comment>
<comment type="similarity">
    <text evidence="12">Belongs to the NFYB/HAP3 subunit family.</text>
</comment>
<organism>
    <name type="scientific">Arabidopsis thaliana</name>
    <name type="common">Mouse-ear cress</name>
    <dbReference type="NCBI Taxonomy" id="3702"/>
    <lineage>
        <taxon>Eukaryota</taxon>
        <taxon>Viridiplantae</taxon>
        <taxon>Streptophyta</taxon>
        <taxon>Embryophyta</taxon>
        <taxon>Tracheophyta</taxon>
        <taxon>Spermatophyta</taxon>
        <taxon>Magnoliopsida</taxon>
        <taxon>eudicotyledons</taxon>
        <taxon>Gunneridae</taxon>
        <taxon>Pentapetalae</taxon>
        <taxon>rosids</taxon>
        <taxon>malvids</taxon>
        <taxon>Brassicales</taxon>
        <taxon>Brassicaceae</taxon>
        <taxon>Camelineae</taxon>
        <taxon>Arabidopsis</taxon>
    </lineage>
</organism>
<dbReference type="EMBL" id="Z97336">
    <property type="protein sequence ID" value="CAB10233.1"/>
    <property type="molecule type" value="Genomic_DNA"/>
</dbReference>
<dbReference type="EMBL" id="AL161539">
    <property type="protein sequence ID" value="CAB78496.1"/>
    <property type="molecule type" value="Genomic_DNA"/>
</dbReference>
<dbReference type="EMBL" id="CP002687">
    <property type="protein sequence ID" value="AEE83458.1"/>
    <property type="molecule type" value="Genomic_DNA"/>
</dbReference>
<dbReference type="EMBL" id="AK117818">
    <property type="protein sequence ID" value="BAC42460.1"/>
    <property type="molecule type" value="mRNA"/>
</dbReference>
<dbReference type="EMBL" id="BT003684">
    <property type="protein sequence ID" value="AAO39912.1"/>
    <property type="molecule type" value="mRNA"/>
</dbReference>
<dbReference type="PIR" id="G71407">
    <property type="entry name" value="G71407"/>
</dbReference>
<dbReference type="RefSeq" id="NP_193190.1">
    <property type="nucleotide sequence ID" value="NM_117534.3"/>
</dbReference>
<dbReference type="PDB" id="7CVO">
    <property type="method" value="X-ray"/>
    <property type="resolution" value="2.60 A"/>
    <property type="chains" value="B/G=18-120"/>
</dbReference>
<dbReference type="PDBsum" id="7CVO"/>
<dbReference type="SMR" id="O23310"/>
<dbReference type="BioGRID" id="12398">
    <property type="interactions" value="22"/>
</dbReference>
<dbReference type="FunCoup" id="O23310">
    <property type="interactions" value="3134"/>
</dbReference>
<dbReference type="IntAct" id="O23310">
    <property type="interactions" value="14"/>
</dbReference>
<dbReference type="STRING" id="3702.O23310"/>
<dbReference type="GlyGen" id="O23310">
    <property type="glycosylation" value="1 site, 1 O-linked glycan (1 site)"/>
</dbReference>
<dbReference type="PaxDb" id="3702-AT4G14540.1"/>
<dbReference type="ProteomicsDB" id="248932"/>
<dbReference type="EnsemblPlants" id="AT4G14540.1">
    <property type="protein sequence ID" value="AT4G14540.1"/>
    <property type="gene ID" value="AT4G14540"/>
</dbReference>
<dbReference type="GeneID" id="827101"/>
<dbReference type="Gramene" id="AT4G14540.1">
    <property type="protein sequence ID" value="AT4G14540.1"/>
    <property type="gene ID" value="AT4G14540"/>
</dbReference>
<dbReference type="KEGG" id="ath:AT4G14540"/>
<dbReference type="Araport" id="AT4G14540"/>
<dbReference type="TAIR" id="AT4G14540">
    <property type="gene designation" value="NF-YB3"/>
</dbReference>
<dbReference type="eggNOG" id="KOG0869">
    <property type="taxonomic scope" value="Eukaryota"/>
</dbReference>
<dbReference type="HOGENOM" id="CLU_066247_1_1_1"/>
<dbReference type="InParanoid" id="O23310"/>
<dbReference type="OMA" id="VEDYHGM"/>
<dbReference type="OrthoDB" id="386949at2759"/>
<dbReference type="PhylomeDB" id="O23310"/>
<dbReference type="PRO" id="PR:O23310"/>
<dbReference type="Proteomes" id="UP000006548">
    <property type="component" value="Chromosome 4"/>
</dbReference>
<dbReference type="ExpressionAtlas" id="O23310">
    <property type="expression patterns" value="baseline and differential"/>
</dbReference>
<dbReference type="GO" id="GO:0016602">
    <property type="term" value="C:CCAAT-binding factor complex"/>
    <property type="evidence" value="ECO:0007669"/>
    <property type="project" value="InterPro"/>
</dbReference>
<dbReference type="GO" id="GO:0005829">
    <property type="term" value="C:cytosol"/>
    <property type="evidence" value="ECO:0007005"/>
    <property type="project" value="TAIR"/>
</dbReference>
<dbReference type="GO" id="GO:0005634">
    <property type="term" value="C:nucleus"/>
    <property type="evidence" value="ECO:0000314"/>
    <property type="project" value="UniProtKB"/>
</dbReference>
<dbReference type="GO" id="GO:0001228">
    <property type="term" value="F:DNA-binding transcription activator activity, RNA polymerase II-specific"/>
    <property type="evidence" value="ECO:0007669"/>
    <property type="project" value="InterPro"/>
</dbReference>
<dbReference type="GO" id="GO:0003700">
    <property type="term" value="F:DNA-binding transcription factor activity"/>
    <property type="evidence" value="ECO:0000250"/>
    <property type="project" value="TAIR"/>
</dbReference>
<dbReference type="GO" id="GO:0046982">
    <property type="term" value="F:protein heterodimerization activity"/>
    <property type="evidence" value="ECO:0007669"/>
    <property type="project" value="InterPro"/>
</dbReference>
<dbReference type="GO" id="GO:0043565">
    <property type="term" value="F:sequence-specific DNA binding"/>
    <property type="evidence" value="ECO:0007669"/>
    <property type="project" value="InterPro"/>
</dbReference>
<dbReference type="GO" id="GO:0045893">
    <property type="term" value="P:positive regulation of DNA-templated transcription"/>
    <property type="evidence" value="ECO:0000314"/>
    <property type="project" value="UniProtKB"/>
</dbReference>
<dbReference type="GO" id="GO:0009408">
    <property type="term" value="P:response to heat"/>
    <property type="evidence" value="ECO:0000314"/>
    <property type="project" value="UniProtKB"/>
</dbReference>
<dbReference type="GO" id="GO:0009414">
    <property type="term" value="P:response to water deprivation"/>
    <property type="evidence" value="ECO:0000315"/>
    <property type="project" value="TAIR"/>
</dbReference>
<dbReference type="CDD" id="cd22907">
    <property type="entry name" value="HFD_NFYB"/>
    <property type="match status" value="1"/>
</dbReference>
<dbReference type="FunFam" id="1.10.20.10:FF:000035">
    <property type="entry name" value="Nuclear transcription factor Y subunit B-3"/>
    <property type="match status" value="1"/>
</dbReference>
<dbReference type="Gene3D" id="1.10.20.10">
    <property type="entry name" value="Histone, subunit A"/>
    <property type="match status" value="1"/>
</dbReference>
<dbReference type="InterPro" id="IPR003958">
    <property type="entry name" value="CBFA_NFYB_domain"/>
</dbReference>
<dbReference type="InterPro" id="IPR009072">
    <property type="entry name" value="Histone-fold"/>
</dbReference>
<dbReference type="InterPro" id="IPR027113">
    <property type="entry name" value="Transc_fact_NFYB/HAP3"/>
</dbReference>
<dbReference type="InterPro" id="IPR003956">
    <property type="entry name" value="Transcrpt_fac_NFYB/HAP3_CS"/>
</dbReference>
<dbReference type="PANTHER" id="PTHR11064">
    <property type="entry name" value="CCAAT-BINDING TRANSCRIPTION FACTOR-RELATED"/>
    <property type="match status" value="1"/>
</dbReference>
<dbReference type="PANTHER" id="PTHR11064:SF9">
    <property type="entry name" value="NUCLEAR TRANSCRIPTION FACTOR Y SUBUNIT BETA"/>
    <property type="match status" value="1"/>
</dbReference>
<dbReference type="Pfam" id="PF00808">
    <property type="entry name" value="CBFD_NFYB_HMF"/>
    <property type="match status" value="1"/>
</dbReference>
<dbReference type="PRINTS" id="PR00615">
    <property type="entry name" value="CCAATSUBUNTA"/>
</dbReference>
<dbReference type="SUPFAM" id="SSF47113">
    <property type="entry name" value="Histone-fold"/>
    <property type="match status" value="1"/>
</dbReference>
<dbReference type="PROSITE" id="PS00685">
    <property type="entry name" value="NFYB_HAP3"/>
    <property type="match status" value="1"/>
</dbReference>
<feature type="initiator methionine" description="Removed" evidence="5">
    <location>
        <position position="1"/>
    </location>
</feature>
<feature type="chain" id="PRO_0000204617" description="Nuclear transcription factor Y subunit B-3">
    <location>
        <begin position="2"/>
        <end position="161"/>
    </location>
</feature>
<feature type="DNA-binding region" evidence="2">
    <location>
        <begin position="26"/>
        <end position="32"/>
    </location>
</feature>
<feature type="region of interest" description="Disordered" evidence="6">
    <location>
        <begin position="1"/>
        <end position="23"/>
    </location>
</feature>
<feature type="region of interest" description="Subunit association domain (SAD)" evidence="1">
    <location>
        <begin position="53"/>
        <end position="64"/>
    </location>
</feature>
<feature type="region of interest" description="Disordered" evidence="6">
    <location>
        <begin position="114"/>
        <end position="146"/>
    </location>
</feature>
<feature type="compositionally biased region" description="Basic and acidic residues" evidence="6">
    <location>
        <begin position="8"/>
        <end position="23"/>
    </location>
</feature>
<feature type="compositionally biased region" description="Gly residues" evidence="6">
    <location>
        <begin position="128"/>
        <end position="146"/>
    </location>
</feature>
<feature type="modified residue" description="N-acetylalanine" evidence="5">
    <location>
        <position position="2"/>
    </location>
</feature>
<feature type="helix" evidence="16">
    <location>
        <begin position="28"/>
        <end position="37"/>
    </location>
</feature>
<feature type="helix" evidence="16">
    <location>
        <begin position="47"/>
        <end position="74"/>
    </location>
</feature>
<feature type="helix" evidence="16">
    <location>
        <begin position="82"/>
        <end position="92"/>
    </location>
</feature>
<feature type="helix" evidence="16">
    <location>
        <begin position="95"/>
        <end position="108"/>
    </location>
</feature>
<gene>
    <name evidence="9 10" type="primary">NFYB3</name>
    <name type="synonym">HAP3C</name>
    <name evidence="13" type="ordered locus">At4g14540</name>
    <name evidence="14" type="ORF">dl3310w</name>
    <name evidence="15" type="ORF">FCAALL.252</name>
</gene>